<organism>
    <name type="scientific">Haloferax volcanii (strain ATCC 29605 / DSM 3757 / JCM 8879 / NBRC 14742 / NCIMB 2012 / VKM B-1768 / DS2)</name>
    <name type="common">Halobacterium volcanii</name>
    <dbReference type="NCBI Taxonomy" id="309800"/>
    <lineage>
        <taxon>Archaea</taxon>
        <taxon>Methanobacteriati</taxon>
        <taxon>Methanobacteriota</taxon>
        <taxon>Stenosarchaea group</taxon>
        <taxon>Halobacteria</taxon>
        <taxon>Halobacteriales</taxon>
        <taxon>Haloferacaceae</taxon>
        <taxon>Haloferax</taxon>
    </lineage>
</organism>
<reference key="1">
    <citation type="journal article" date="2010" name="PLoS ONE">
        <title>The complete genome sequence of Haloferax volcanii DS2, a model archaeon.</title>
        <authorList>
            <person name="Hartman A.L."/>
            <person name="Norais C."/>
            <person name="Badger J.H."/>
            <person name="Delmas S."/>
            <person name="Haldenby S."/>
            <person name="Madupu R."/>
            <person name="Robinson J."/>
            <person name="Khouri H."/>
            <person name="Ren Q."/>
            <person name="Lowe T.M."/>
            <person name="Maupin-Furlow J."/>
            <person name="Pohlschroder M."/>
            <person name="Daniels C."/>
            <person name="Pfeiffer F."/>
            <person name="Allers T."/>
            <person name="Eisen J.A."/>
        </authorList>
    </citation>
    <scope>NUCLEOTIDE SEQUENCE [LARGE SCALE GENOMIC DNA]</scope>
    <source>
        <strain>ATCC 29605 / DSM 3757 / JCM 8879 / NBRC 14742 / NCIMB 2012 / VKM B-1768 / DS2</strain>
    </source>
</reference>
<reference key="2">
    <citation type="journal article" date="2014" name="FEMS Microbiol. Lett.">
        <title>Identification and characterization of 2-keto-3-deoxygluconate kinase and 2-keto-3-deoxygalactonate kinase in the haloarchaeon Haloferax volcanii.</title>
        <authorList>
            <person name="Pickl A."/>
            <person name="Johnsen U."/>
            <person name="Archer R.M."/>
            <person name="Schoenheit P."/>
        </authorList>
    </citation>
    <scope>FUNCTION</scope>
    <scope>CATALYTIC ACTIVITY</scope>
    <scope>BIOPHYSICOCHEMICAL PROPERTIES</scope>
    <scope>SUBUNIT</scope>
    <scope>INDUCTION</scope>
    <scope>DISRUPTION PHENOTYPE</scope>
    <source>
        <strain>DS2 / DS70 / H26</strain>
    </source>
</reference>
<gene>
    <name evidence="3" type="primary">kdgK2</name>
    <name evidence="5" type="ordered locus">HVO_A0328</name>
</gene>
<comment type="function">
    <text evidence="2">Involved in galactose catabolism. Catalyzes the phosphorylation of 2-keto-3-deoxygalactonate (KDGal) to produce 2-keto-3-deoxy-6-phosphogalactonate (KDPGal). Can also phosphorylate 2-keto-3-deoxygluconate (KDG) to 2-keto-3-deoxy-6-phosphogluconate (KDPG), but the catalytic efficiency for KDGal is 50-fold higher than for KDG.</text>
</comment>
<comment type="catalytic activity">
    <reaction evidence="2">
        <text>2-dehydro-3-deoxy-D-galactonate + ATP = 2-dehydro-3-deoxy-6-phospho-D-galactonate + ADP + H(+)</text>
        <dbReference type="Rhea" id="RHEA:16525"/>
        <dbReference type="ChEBI" id="CHEBI:15378"/>
        <dbReference type="ChEBI" id="CHEBI:30616"/>
        <dbReference type="ChEBI" id="CHEBI:57989"/>
        <dbReference type="ChEBI" id="CHEBI:58298"/>
        <dbReference type="ChEBI" id="CHEBI:456216"/>
        <dbReference type="EC" id="2.7.1.58"/>
    </reaction>
    <physiologicalReaction direction="left-to-right" evidence="2">
        <dbReference type="Rhea" id="RHEA:16526"/>
    </physiologicalReaction>
</comment>
<comment type="biophysicochemical properties">
    <kinetics>
        <KM evidence="2">0.2 mM for KDGal</KM>
        <KM evidence="2">8.8 mM for KDG</KM>
        <KM evidence="2">0.3 mM for ATP</KM>
        <Vmax evidence="2">148.0 umol/min/mg enzyme with KDGal as substrate</Vmax>
        <Vmax evidence="2">125.0 umol/min/mg enzyme with KDG as substrate</Vmax>
    </kinetics>
</comment>
<comment type="subunit">
    <text evidence="2">Homohexamer.</text>
</comment>
<comment type="induction">
    <text evidence="2">Highly induced by galactose.</text>
</comment>
<comment type="disruption phenotype">
    <text evidence="2">Deletion of the gene does not affect growth on glucose or galactose. Double deletion mutant kdgK1/kdgK2 loses the ability to grow on galactose.</text>
</comment>
<comment type="similarity">
    <text evidence="4">Belongs to the carbohydrate kinase PfkB family.</text>
</comment>
<evidence type="ECO:0000250" key="1">
    <source>
        <dbReference type="UniProtKB" id="Q97U29"/>
    </source>
</evidence>
<evidence type="ECO:0000269" key="2">
    <source>
    </source>
</evidence>
<evidence type="ECO:0000303" key="3">
    <source>
    </source>
</evidence>
<evidence type="ECO:0000305" key="4"/>
<evidence type="ECO:0000312" key="5">
    <source>
        <dbReference type="EMBL" id="ADE02032.1"/>
    </source>
</evidence>
<keyword id="KW-0067">ATP-binding</keyword>
<keyword id="KW-0119">Carbohydrate metabolism</keyword>
<keyword id="KW-0418">Kinase</keyword>
<keyword id="KW-0547">Nucleotide-binding</keyword>
<keyword id="KW-0614">Plasmid</keyword>
<keyword id="KW-1185">Reference proteome</keyword>
<keyword id="KW-0808">Transferase</keyword>
<feature type="chain" id="PRO_0000449270" description="2-dehydro-3-deoxygalactonokinase">
    <location>
        <begin position="1"/>
        <end position="318"/>
    </location>
</feature>
<feature type="active site" description="Proton acceptor" evidence="1">
    <location>
        <position position="260"/>
    </location>
</feature>
<feature type="binding site" evidence="1">
    <location>
        <begin position="35"/>
        <end position="39"/>
    </location>
    <ligand>
        <name>substrate</name>
    </ligand>
</feature>
<feature type="binding site" evidence="1">
    <location>
        <position position="90"/>
    </location>
    <ligand>
        <name>substrate</name>
    </ligand>
</feature>
<feature type="binding site" evidence="1">
    <location>
        <begin position="105"/>
        <end position="107"/>
    </location>
    <ligand>
        <name>substrate</name>
    </ligand>
</feature>
<feature type="binding site" evidence="1">
    <location>
        <begin position="167"/>
        <end position="169"/>
    </location>
    <ligand>
        <name>ATP</name>
        <dbReference type="ChEBI" id="CHEBI:30616"/>
    </ligand>
</feature>
<feature type="binding site" evidence="1">
    <location>
        <position position="169"/>
    </location>
    <ligand>
        <name>substrate</name>
    </ligand>
</feature>
<feature type="binding site" evidence="1">
    <location>
        <begin position="228"/>
        <end position="233"/>
    </location>
    <ligand>
        <name>ATP</name>
        <dbReference type="ChEBI" id="CHEBI:30616"/>
    </ligand>
</feature>
<feature type="binding site" evidence="1">
    <location>
        <begin position="257"/>
        <end position="260"/>
    </location>
    <ligand>
        <name>ATP</name>
        <dbReference type="ChEBI" id="CHEBI:30616"/>
    </ligand>
</feature>
<feature type="binding site" evidence="1">
    <location>
        <position position="260"/>
    </location>
    <ligand>
        <name>substrate</name>
    </ligand>
</feature>
<feature type="binding site" evidence="1">
    <location>
        <position position="296"/>
    </location>
    <ligand>
        <name>substrate</name>
    </ligand>
</feature>
<accession>D4GR05</accession>
<accession>L9V354</accession>
<sequence length="318" mass="33998">MTAELVTFGETMIRLSPPEGERIETARSLEFRTAGAESNVAVAASRLGCSAAWLSKLPDSPLGRRVTTELRTHGVEPYVRWDDDARQGAYYIEQGRAPRPTNVIYDRADAAVTTARPDELAVDIVEDAAAFYTSGITPALSETLRETTGELLQTATEAGTTTAFDLNYRSKLWSPSDARDACESLFPKVDVLVAAERDIRAVLELDGDAPTLASELAGDFDFETVVVTRGEDGALARHGGTVYEQPVFETDTVDAIGTGDAFVGAFLSRLIAGEPVETALAYGAATAALKRTVHGDLAVVTPDEVERVLRGGDAGIDR</sequence>
<geneLocation type="plasmid">
    <name>pHV4</name>
</geneLocation>
<name>KDGK2_HALVD</name>
<proteinExistence type="evidence at protein level"/>
<protein>
    <recommendedName>
        <fullName evidence="4">2-dehydro-3-deoxygalactonokinase</fullName>
        <ecNumber evidence="2">2.7.1.58</ecNumber>
    </recommendedName>
    <alternativeName>
        <fullName evidence="3">2-keto-3-deoxygalactonate kinase</fullName>
        <shortName evidence="3">KDGal kinase</shortName>
    </alternativeName>
    <alternativeName>
        <fullName evidence="3">KDGK-2</fullName>
    </alternativeName>
</protein>
<dbReference type="EC" id="2.7.1.58" evidence="2"/>
<dbReference type="EMBL" id="CP001955">
    <property type="protein sequence ID" value="ADE02032.1"/>
    <property type="molecule type" value="Genomic_DNA"/>
</dbReference>
<dbReference type="RefSeq" id="WP_004043241.1">
    <property type="nucleotide sequence ID" value="NC_013966.1"/>
</dbReference>
<dbReference type="SMR" id="D4GR05"/>
<dbReference type="PaxDb" id="309800-C498_10271"/>
<dbReference type="EnsemblBacteria" id="ADE02032">
    <property type="protein sequence ID" value="ADE02032"/>
    <property type="gene ID" value="HVO_A0328"/>
</dbReference>
<dbReference type="GeneID" id="8923588"/>
<dbReference type="KEGG" id="hvo:HVO_A0328"/>
<dbReference type="PATRIC" id="fig|309800.29.peg.1997"/>
<dbReference type="eggNOG" id="arCOG00014">
    <property type="taxonomic scope" value="Archaea"/>
</dbReference>
<dbReference type="HOGENOM" id="CLU_027634_0_1_2"/>
<dbReference type="OrthoDB" id="96179at2157"/>
<dbReference type="BRENDA" id="2.7.1.11">
    <property type="organism ID" value="2561"/>
</dbReference>
<dbReference type="BRENDA" id="2.7.1.178">
    <property type="organism ID" value="2561"/>
</dbReference>
<dbReference type="BRENDA" id="2.7.1.58">
    <property type="organism ID" value="2561"/>
</dbReference>
<dbReference type="Proteomes" id="UP000008243">
    <property type="component" value="Plasmid pHV4"/>
</dbReference>
<dbReference type="GO" id="GO:0008671">
    <property type="term" value="F:2-dehydro-3-deoxygalactonokinase activity"/>
    <property type="evidence" value="ECO:0007669"/>
    <property type="project" value="UniProtKB-EC"/>
</dbReference>
<dbReference type="GO" id="GO:0005524">
    <property type="term" value="F:ATP binding"/>
    <property type="evidence" value="ECO:0007669"/>
    <property type="project" value="UniProtKB-KW"/>
</dbReference>
<dbReference type="CDD" id="cd01166">
    <property type="entry name" value="KdgK"/>
    <property type="match status" value="1"/>
</dbReference>
<dbReference type="Gene3D" id="3.40.1190.20">
    <property type="match status" value="1"/>
</dbReference>
<dbReference type="InterPro" id="IPR052700">
    <property type="entry name" value="Carb_kinase_PfkB-like"/>
</dbReference>
<dbReference type="InterPro" id="IPR054871">
    <property type="entry name" value="KDG_KDGal_kin_Halo"/>
</dbReference>
<dbReference type="InterPro" id="IPR011611">
    <property type="entry name" value="PfkB_dom"/>
</dbReference>
<dbReference type="InterPro" id="IPR029056">
    <property type="entry name" value="Ribokinase-like"/>
</dbReference>
<dbReference type="NCBIfam" id="NF041332">
    <property type="entry name" value="KDG_KDGal_kin_Halo"/>
    <property type="match status" value="1"/>
</dbReference>
<dbReference type="PANTHER" id="PTHR43320:SF2">
    <property type="entry name" value="2-DEHYDRO-3-DEOXYGLUCONOKINASE_2-DEHYDRO-3-DEOXYGALACTONOKINASE"/>
    <property type="match status" value="1"/>
</dbReference>
<dbReference type="PANTHER" id="PTHR43320">
    <property type="entry name" value="SUGAR KINASE"/>
    <property type="match status" value="1"/>
</dbReference>
<dbReference type="Pfam" id="PF00294">
    <property type="entry name" value="PfkB"/>
    <property type="match status" value="1"/>
</dbReference>
<dbReference type="SUPFAM" id="SSF53613">
    <property type="entry name" value="Ribokinase-like"/>
    <property type="match status" value="1"/>
</dbReference>